<feature type="chain" id="PRO_0000280768" description="Putative dioxygenase RC0543">
    <location>
        <begin position="1"/>
        <end position="208"/>
    </location>
</feature>
<dbReference type="EC" id="1.13.11.-"/>
<dbReference type="EMBL" id="AE006914">
    <property type="protein sequence ID" value="AAL03081.1"/>
    <property type="molecule type" value="Genomic_DNA"/>
</dbReference>
<dbReference type="PIR" id="G97767">
    <property type="entry name" value="G97767"/>
</dbReference>
<dbReference type="RefSeq" id="WP_010977179.1">
    <property type="nucleotide sequence ID" value="NC_003103.1"/>
</dbReference>
<dbReference type="SMR" id="Q92I77"/>
<dbReference type="GeneID" id="928746"/>
<dbReference type="KEGG" id="rco:RC0543"/>
<dbReference type="HOGENOM" id="CLU_1320101_0_0_5"/>
<dbReference type="Proteomes" id="UP000000816">
    <property type="component" value="Chromosome"/>
</dbReference>
<dbReference type="GO" id="GO:0008199">
    <property type="term" value="F:ferric iron binding"/>
    <property type="evidence" value="ECO:0007669"/>
    <property type="project" value="InterPro"/>
</dbReference>
<dbReference type="GO" id="GO:0016702">
    <property type="term" value="F:oxidoreductase activity, acting on single donors with incorporation of molecular oxygen, incorporation of two atoms of oxygen"/>
    <property type="evidence" value="ECO:0007669"/>
    <property type="project" value="InterPro"/>
</dbReference>
<dbReference type="Gene3D" id="2.60.130.10">
    <property type="entry name" value="Aromatic compound dioxygenase"/>
    <property type="match status" value="1"/>
</dbReference>
<dbReference type="InterPro" id="IPR000627">
    <property type="entry name" value="Intradiol_dOase_C"/>
</dbReference>
<dbReference type="InterPro" id="IPR015889">
    <property type="entry name" value="Intradiol_dOase_core"/>
</dbReference>
<dbReference type="InterPro" id="IPR050770">
    <property type="entry name" value="Intradiol_RC_Dioxygenase"/>
</dbReference>
<dbReference type="PANTHER" id="PTHR33711">
    <property type="entry name" value="DIOXYGENASE, PUTATIVE (AFU_ORTHOLOGUE AFUA_2G02910)-RELATED"/>
    <property type="match status" value="1"/>
</dbReference>
<dbReference type="PANTHER" id="PTHR33711:SF10">
    <property type="entry name" value="INTRADIOL RING-CLEAVAGE DIOXYGENASES DOMAIN-CONTAINING PROTEIN"/>
    <property type="match status" value="1"/>
</dbReference>
<dbReference type="Pfam" id="PF00775">
    <property type="entry name" value="Dioxygenase_C"/>
    <property type="match status" value="1"/>
</dbReference>
<dbReference type="SUPFAM" id="SSF49482">
    <property type="entry name" value="Aromatic compound dioxygenase"/>
    <property type="match status" value="1"/>
</dbReference>
<sequence>MKKFIFCFLCLWTLNIFAASKTYPNKLNRCKITRNIFNDYEPKVFETTNNLLRKTGRLSKFYGERILIKGKVLDQNCVPVADAKVYLWQAGSGGKYPYEPLKTRVDKRRFTSKSDSSFTGSGIATTNNKGEYYFISMLPYTSSRYLRSANIRIEHPSLTTLETRLDLSDQNMCDNECGEVNPILIEPQENMPSYCFDLVLQGTTLKRY</sequence>
<name>Y543_RICCN</name>
<comment type="similarity">
    <text evidence="1">Belongs to the intradiol ring-cleavage dioxygenase family.</text>
</comment>
<keyword id="KW-0223">Dioxygenase</keyword>
<keyword id="KW-0560">Oxidoreductase</keyword>
<organism>
    <name type="scientific">Rickettsia conorii (strain ATCC VR-613 / Malish 7)</name>
    <dbReference type="NCBI Taxonomy" id="272944"/>
    <lineage>
        <taxon>Bacteria</taxon>
        <taxon>Pseudomonadati</taxon>
        <taxon>Pseudomonadota</taxon>
        <taxon>Alphaproteobacteria</taxon>
        <taxon>Rickettsiales</taxon>
        <taxon>Rickettsiaceae</taxon>
        <taxon>Rickettsieae</taxon>
        <taxon>Rickettsia</taxon>
        <taxon>spotted fever group</taxon>
    </lineage>
</organism>
<accession>Q92I77</accession>
<proteinExistence type="inferred from homology"/>
<reference key="1">
    <citation type="journal article" date="2001" name="Science">
        <title>Mechanisms of evolution in Rickettsia conorii and R. prowazekii.</title>
        <authorList>
            <person name="Ogata H."/>
            <person name="Audic S."/>
            <person name="Renesto-Audiffren P."/>
            <person name="Fournier P.-E."/>
            <person name="Barbe V."/>
            <person name="Samson D."/>
            <person name="Roux V."/>
            <person name="Cossart P."/>
            <person name="Weissenbach J."/>
            <person name="Claverie J.-M."/>
            <person name="Raoult D."/>
        </authorList>
    </citation>
    <scope>NUCLEOTIDE SEQUENCE [LARGE SCALE GENOMIC DNA]</scope>
    <source>
        <strain>ATCC VR-613 / Malish 7</strain>
    </source>
</reference>
<gene>
    <name type="ordered locus">RC0543</name>
</gene>
<protein>
    <recommendedName>
        <fullName>Putative dioxygenase RC0543</fullName>
        <ecNumber>1.13.11.-</ecNumber>
    </recommendedName>
</protein>
<evidence type="ECO:0000305" key="1"/>